<name>SYS_METHJ</name>
<organism>
    <name type="scientific">Methanospirillum hungatei JF-1 (strain ATCC 27890 / DSM 864 / NBRC 100397 / JF-1)</name>
    <dbReference type="NCBI Taxonomy" id="323259"/>
    <lineage>
        <taxon>Archaea</taxon>
        <taxon>Methanobacteriati</taxon>
        <taxon>Methanobacteriota</taxon>
        <taxon>Stenosarchaea group</taxon>
        <taxon>Methanomicrobia</taxon>
        <taxon>Methanomicrobiales</taxon>
        <taxon>Methanospirillaceae</taxon>
        <taxon>Methanospirillum</taxon>
    </lineage>
</organism>
<accession>Q2FS27</accession>
<keyword id="KW-0030">Aminoacyl-tRNA synthetase</keyword>
<keyword id="KW-0067">ATP-binding</keyword>
<keyword id="KW-0963">Cytoplasm</keyword>
<keyword id="KW-0436">Ligase</keyword>
<keyword id="KW-0547">Nucleotide-binding</keyword>
<keyword id="KW-0648">Protein biosynthesis</keyword>
<keyword id="KW-1185">Reference proteome</keyword>
<dbReference type="EC" id="6.1.1.11" evidence="1"/>
<dbReference type="EMBL" id="CP000254">
    <property type="protein sequence ID" value="ABD42207.1"/>
    <property type="molecule type" value="Genomic_DNA"/>
</dbReference>
<dbReference type="RefSeq" id="WP_011449465.1">
    <property type="nucleotide sequence ID" value="NC_007796.1"/>
</dbReference>
<dbReference type="SMR" id="Q2FS27"/>
<dbReference type="STRING" id="323259.Mhun_2507"/>
<dbReference type="EnsemblBacteria" id="ABD42207">
    <property type="protein sequence ID" value="ABD42207"/>
    <property type="gene ID" value="Mhun_2507"/>
</dbReference>
<dbReference type="GeneID" id="3924775"/>
<dbReference type="KEGG" id="mhu:Mhun_2507"/>
<dbReference type="eggNOG" id="arCOG00403">
    <property type="taxonomic scope" value="Archaea"/>
</dbReference>
<dbReference type="HOGENOM" id="CLU_023797_0_1_2"/>
<dbReference type="InParanoid" id="Q2FS27"/>
<dbReference type="OrthoDB" id="35932at2157"/>
<dbReference type="UniPathway" id="UPA00906">
    <property type="reaction ID" value="UER00895"/>
</dbReference>
<dbReference type="Proteomes" id="UP000001941">
    <property type="component" value="Chromosome"/>
</dbReference>
<dbReference type="GO" id="GO:0005737">
    <property type="term" value="C:cytoplasm"/>
    <property type="evidence" value="ECO:0007669"/>
    <property type="project" value="UniProtKB-SubCell"/>
</dbReference>
<dbReference type="GO" id="GO:0005524">
    <property type="term" value="F:ATP binding"/>
    <property type="evidence" value="ECO:0007669"/>
    <property type="project" value="UniProtKB-UniRule"/>
</dbReference>
<dbReference type="GO" id="GO:0004828">
    <property type="term" value="F:serine-tRNA ligase activity"/>
    <property type="evidence" value="ECO:0007669"/>
    <property type="project" value="UniProtKB-UniRule"/>
</dbReference>
<dbReference type="GO" id="GO:0016260">
    <property type="term" value="P:selenocysteine biosynthetic process"/>
    <property type="evidence" value="ECO:0007669"/>
    <property type="project" value="UniProtKB-UniRule"/>
</dbReference>
<dbReference type="GO" id="GO:0006434">
    <property type="term" value="P:seryl-tRNA aminoacylation"/>
    <property type="evidence" value="ECO:0007669"/>
    <property type="project" value="UniProtKB-UniRule"/>
</dbReference>
<dbReference type="CDD" id="cd00770">
    <property type="entry name" value="SerRS_core"/>
    <property type="match status" value="1"/>
</dbReference>
<dbReference type="Gene3D" id="3.30.930.10">
    <property type="entry name" value="Bira Bifunctional Protein, Domain 2"/>
    <property type="match status" value="1"/>
</dbReference>
<dbReference type="Gene3D" id="1.10.287.40">
    <property type="entry name" value="Serine-tRNA synthetase, tRNA binding domain"/>
    <property type="match status" value="1"/>
</dbReference>
<dbReference type="HAMAP" id="MF_00176">
    <property type="entry name" value="Ser_tRNA_synth_type1"/>
    <property type="match status" value="1"/>
</dbReference>
<dbReference type="InterPro" id="IPR002314">
    <property type="entry name" value="aa-tRNA-synt_IIb"/>
</dbReference>
<dbReference type="InterPro" id="IPR006195">
    <property type="entry name" value="aa-tRNA-synth_II"/>
</dbReference>
<dbReference type="InterPro" id="IPR045864">
    <property type="entry name" value="aa-tRNA-synth_II/BPL/LPL"/>
</dbReference>
<dbReference type="InterPro" id="IPR002317">
    <property type="entry name" value="Ser-tRNA-ligase_type_1"/>
</dbReference>
<dbReference type="InterPro" id="IPR015866">
    <property type="entry name" value="Ser-tRNA-synth_1_N"/>
</dbReference>
<dbReference type="InterPro" id="IPR042103">
    <property type="entry name" value="SerRS_1_N_sf"/>
</dbReference>
<dbReference type="InterPro" id="IPR033729">
    <property type="entry name" value="SerRS_core"/>
</dbReference>
<dbReference type="InterPro" id="IPR010978">
    <property type="entry name" value="tRNA-bd_arm"/>
</dbReference>
<dbReference type="NCBIfam" id="TIGR00414">
    <property type="entry name" value="serS"/>
    <property type="match status" value="1"/>
</dbReference>
<dbReference type="PANTHER" id="PTHR11778">
    <property type="entry name" value="SERYL-TRNA SYNTHETASE"/>
    <property type="match status" value="1"/>
</dbReference>
<dbReference type="Pfam" id="PF02403">
    <property type="entry name" value="Seryl_tRNA_N"/>
    <property type="match status" value="1"/>
</dbReference>
<dbReference type="Pfam" id="PF00587">
    <property type="entry name" value="tRNA-synt_2b"/>
    <property type="match status" value="1"/>
</dbReference>
<dbReference type="PIRSF" id="PIRSF001529">
    <property type="entry name" value="Ser-tRNA-synth_IIa"/>
    <property type="match status" value="1"/>
</dbReference>
<dbReference type="PRINTS" id="PR00981">
    <property type="entry name" value="TRNASYNTHSER"/>
</dbReference>
<dbReference type="SUPFAM" id="SSF55681">
    <property type="entry name" value="Class II aaRS and biotin synthetases"/>
    <property type="match status" value="1"/>
</dbReference>
<dbReference type="SUPFAM" id="SSF46589">
    <property type="entry name" value="tRNA-binding arm"/>
    <property type="match status" value="1"/>
</dbReference>
<dbReference type="PROSITE" id="PS50862">
    <property type="entry name" value="AA_TRNA_LIGASE_II"/>
    <property type="match status" value="1"/>
</dbReference>
<reference key="1">
    <citation type="journal article" date="2016" name="Stand. Genomic Sci.">
        <title>Complete genome sequence of Methanospirillum hungatei type strain JF1.</title>
        <authorList>
            <person name="Gunsalus R.P."/>
            <person name="Cook L.E."/>
            <person name="Crable B."/>
            <person name="Rohlin L."/>
            <person name="McDonald E."/>
            <person name="Mouttaki H."/>
            <person name="Sieber J.R."/>
            <person name="Poweleit N."/>
            <person name="Zhou H."/>
            <person name="Lapidus A.L."/>
            <person name="Daligault H.E."/>
            <person name="Land M."/>
            <person name="Gilna P."/>
            <person name="Ivanova N."/>
            <person name="Kyrpides N."/>
            <person name="Culley D.E."/>
            <person name="McInerney M.J."/>
        </authorList>
    </citation>
    <scope>NUCLEOTIDE SEQUENCE [LARGE SCALE GENOMIC DNA]</scope>
    <source>
        <strain>ATCC 27890 / DSM 864 / NBRC 100397 / JF-1</strain>
    </source>
</reference>
<sequence>MLDIRFVRANPDAIREDLKKRNDMEKLAWIDDLLVQDIRHRELIGQTNELRRRRNSISYDINRAKKAGEDASALIAEAAGLPGRIKENEAEMEEISKKIRYYLMRIPNILHESVPVGADDTQNVEVKRYGTPRTFTFELKNHGQLAADNDWADFERATKTSGAGFYFLKGNLVLLDLALQRFSLDILMEKGYTPIIPPYMINRKSYEEVTDLDDFEKVMYKIEDDDAYLIATSEHPMAAMYQDEIFEEKDLPLRLAGLSPCFRREIGSHGLDTKGLFRVHQFHKVEQFVYCHPDDSWTIHEELRENAEEIFQKLEIPYRVVNICTGDIGTVAAKKYDIEAWMPRENEYREVVSCSNCTTYQAVRLNIRVRDKEDFESKQFVHTLNSTAIATSRAMRAILENNQQEDGSVVIPKVLRPYMNDKEFL</sequence>
<gene>
    <name evidence="1" type="primary">serS</name>
    <name type="ordered locus">Mhun_2507</name>
</gene>
<feature type="chain" id="PRO_1000019728" description="Serine--tRNA ligase">
    <location>
        <begin position="1"/>
        <end position="425"/>
    </location>
</feature>
<feature type="binding site" evidence="1">
    <location>
        <begin position="232"/>
        <end position="234"/>
    </location>
    <ligand>
        <name>L-serine</name>
        <dbReference type="ChEBI" id="CHEBI:33384"/>
    </ligand>
</feature>
<feature type="binding site" evidence="1">
    <location>
        <begin position="263"/>
        <end position="265"/>
    </location>
    <ligand>
        <name>ATP</name>
        <dbReference type="ChEBI" id="CHEBI:30616"/>
    </ligand>
</feature>
<feature type="binding site" evidence="1">
    <location>
        <position position="279"/>
    </location>
    <ligand>
        <name>ATP</name>
        <dbReference type="ChEBI" id="CHEBI:30616"/>
    </ligand>
</feature>
<feature type="binding site" evidence="1">
    <location>
        <position position="286"/>
    </location>
    <ligand>
        <name>L-serine</name>
        <dbReference type="ChEBI" id="CHEBI:33384"/>
    </ligand>
</feature>
<feature type="binding site" evidence="1">
    <location>
        <begin position="350"/>
        <end position="353"/>
    </location>
    <ligand>
        <name>ATP</name>
        <dbReference type="ChEBI" id="CHEBI:30616"/>
    </ligand>
</feature>
<feature type="binding site" evidence="1">
    <location>
        <position position="387"/>
    </location>
    <ligand>
        <name>L-serine</name>
        <dbReference type="ChEBI" id="CHEBI:33384"/>
    </ligand>
</feature>
<comment type="function">
    <text evidence="1">Catalyzes the attachment of serine to tRNA(Ser). Is also able to aminoacylate tRNA(Sec) with serine, to form the misacylated tRNA L-seryl-tRNA(Sec), which will be further converted into selenocysteinyl-tRNA(Sec).</text>
</comment>
<comment type="catalytic activity">
    <reaction evidence="1">
        <text>tRNA(Ser) + L-serine + ATP = L-seryl-tRNA(Ser) + AMP + diphosphate + H(+)</text>
        <dbReference type="Rhea" id="RHEA:12292"/>
        <dbReference type="Rhea" id="RHEA-COMP:9669"/>
        <dbReference type="Rhea" id="RHEA-COMP:9703"/>
        <dbReference type="ChEBI" id="CHEBI:15378"/>
        <dbReference type="ChEBI" id="CHEBI:30616"/>
        <dbReference type="ChEBI" id="CHEBI:33019"/>
        <dbReference type="ChEBI" id="CHEBI:33384"/>
        <dbReference type="ChEBI" id="CHEBI:78442"/>
        <dbReference type="ChEBI" id="CHEBI:78533"/>
        <dbReference type="ChEBI" id="CHEBI:456215"/>
        <dbReference type="EC" id="6.1.1.11"/>
    </reaction>
</comment>
<comment type="catalytic activity">
    <reaction evidence="1">
        <text>tRNA(Sec) + L-serine + ATP = L-seryl-tRNA(Sec) + AMP + diphosphate + H(+)</text>
        <dbReference type="Rhea" id="RHEA:42580"/>
        <dbReference type="Rhea" id="RHEA-COMP:9742"/>
        <dbReference type="Rhea" id="RHEA-COMP:10128"/>
        <dbReference type="ChEBI" id="CHEBI:15378"/>
        <dbReference type="ChEBI" id="CHEBI:30616"/>
        <dbReference type="ChEBI" id="CHEBI:33019"/>
        <dbReference type="ChEBI" id="CHEBI:33384"/>
        <dbReference type="ChEBI" id="CHEBI:78442"/>
        <dbReference type="ChEBI" id="CHEBI:78533"/>
        <dbReference type="ChEBI" id="CHEBI:456215"/>
        <dbReference type="EC" id="6.1.1.11"/>
    </reaction>
</comment>
<comment type="pathway">
    <text evidence="1">Aminoacyl-tRNA biosynthesis; selenocysteinyl-tRNA(Sec) biosynthesis; L-seryl-tRNA(Sec) from L-serine and tRNA(Sec): step 1/1.</text>
</comment>
<comment type="subunit">
    <text evidence="1">Homodimer. The tRNA molecule binds across the dimer.</text>
</comment>
<comment type="subcellular location">
    <subcellularLocation>
        <location evidence="1">Cytoplasm</location>
    </subcellularLocation>
</comment>
<comment type="domain">
    <text evidence="1">Consists of two distinct domains, a catalytic core and a N-terminal extension that is involved in tRNA binding.</text>
</comment>
<comment type="similarity">
    <text evidence="1">Belongs to the class-II aminoacyl-tRNA synthetase family. Type-1 seryl-tRNA synthetase subfamily.</text>
</comment>
<protein>
    <recommendedName>
        <fullName evidence="1">Serine--tRNA ligase</fullName>
        <ecNumber evidence="1">6.1.1.11</ecNumber>
    </recommendedName>
    <alternativeName>
        <fullName evidence="1">Seryl-tRNA synthetase</fullName>
        <shortName evidence="1">SerRS</shortName>
    </alternativeName>
    <alternativeName>
        <fullName evidence="1">Seryl-tRNA(Ser/Sec) synthetase</fullName>
    </alternativeName>
</protein>
<proteinExistence type="inferred from homology"/>
<evidence type="ECO:0000255" key="1">
    <source>
        <dbReference type="HAMAP-Rule" id="MF_00176"/>
    </source>
</evidence>